<comment type="function">
    <text evidence="1">One of the primary rRNA binding proteins, it binds directly to 16S rRNA where it nucleates assembly of the head domain of the 30S subunit. Is located at the subunit interface close to the decoding center, probably blocks exit of the E-site tRNA.</text>
</comment>
<comment type="subunit">
    <text evidence="1">Part of the 30S ribosomal subunit. Contacts proteins S9 and S11.</text>
</comment>
<comment type="similarity">
    <text evidence="1">Belongs to the universal ribosomal protein uS7 family.</text>
</comment>
<evidence type="ECO:0000255" key="1">
    <source>
        <dbReference type="HAMAP-Rule" id="MF_00480"/>
    </source>
</evidence>
<evidence type="ECO:0000305" key="2"/>
<dbReference type="EMBL" id="CP000685">
    <property type="protein sequence ID" value="ABQ03436.1"/>
    <property type="molecule type" value="Genomic_DNA"/>
</dbReference>
<dbReference type="RefSeq" id="WP_012022493.1">
    <property type="nucleotide sequence ID" value="NZ_MUGZ01000005.1"/>
</dbReference>
<dbReference type="SMR" id="A5FMY4"/>
<dbReference type="STRING" id="376686.Fjoh_0400"/>
<dbReference type="KEGG" id="fjo:Fjoh_0400"/>
<dbReference type="eggNOG" id="COG0049">
    <property type="taxonomic scope" value="Bacteria"/>
</dbReference>
<dbReference type="HOGENOM" id="CLU_072226_1_1_10"/>
<dbReference type="OrthoDB" id="9807653at2"/>
<dbReference type="Proteomes" id="UP000006694">
    <property type="component" value="Chromosome"/>
</dbReference>
<dbReference type="GO" id="GO:0015935">
    <property type="term" value="C:small ribosomal subunit"/>
    <property type="evidence" value="ECO:0007669"/>
    <property type="project" value="InterPro"/>
</dbReference>
<dbReference type="GO" id="GO:0019843">
    <property type="term" value="F:rRNA binding"/>
    <property type="evidence" value="ECO:0007669"/>
    <property type="project" value="UniProtKB-UniRule"/>
</dbReference>
<dbReference type="GO" id="GO:0003735">
    <property type="term" value="F:structural constituent of ribosome"/>
    <property type="evidence" value="ECO:0007669"/>
    <property type="project" value="InterPro"/>
</dbReference>
<dbReference type="GO" id="GO:0000049">
    <property type="term" value="F:tRNA binding"/>
    <property type="evidence" value="ECO:0007669"/>
    <property type="project" value="UniProtKB-UniRule"/>
</dbReference>
<dbReference type="GO" id="GO:0006412">
    <property type="term" value="P:translation"/>
    <property type="evidence" value="ECO:0007669"/>
    <property type="project" value="UniProtKB-UniRule"/>
</dbReference>
<dbReference type="CDD" id="cd14869">
    <property type="entry name" value="uS7_Bacteria"/>
    <property type="match status" value="1"/>
</dbReference>
<dbReference type="FunFam" id="1.10.455.10:FF:000001">
    <property type="entry name" value="30S ribosomal protein S7"/>
    <property type="match status" value="1"/>
</dbReference>
<dbReference type="Gene3D" id="1.10.455.10">
    <property type="entry name" value="Ribosomal protein S7 domain"/>
    <property type="match status" value="1"/>
</dbReference>
<dbReference type="HAMAP" id="MF_00480_B">
    <property type="entry name" value="Ribosomal_uS7_B"/>
    <property type="match status" value="1"/>
</dbReference>
<dbReference type="InterPro" id="IPR000235">
    <property type="entry name" value="Ribosomal_uS7"/>
</dbReference>
<dbReference type="InterPro" id="IPR005717">
    <property type="entry name" value="Ribosomal_uS7_bac/org-type"/>
</dbReference>
<dbReference type="InterPro" id="IPR020606">
    <property type="entry name" value="Ribosomal_uS7_CS"/>
</dbReference>
<dbReference type="InterPro" id="IPR023798">
    <property type="entry name" value="Ribosomal_uS7_dom"/>
</dbReference>
<dbReference type="InterPro" id="IPR036823">
    <property type="entry name" value="Ribosomal_uS7_dom_sf"/>
</dbReference>
<dbReference type="NCBIfam" id="TIGR01029">
    <property type="entry name" value="rpsG_bact"/>
    <property type="match status" value="1"/>
</dbReference>
<dbReference type="PANTHER" id="PTHR11205">
    <property type="entry name" value="RIBOSOMAL PROTEIN S7"/>
    <property type="match status" value="1"/>
</dbReference>
<dbReference type="Pfam" id="PF00177">
    <property type="entry name" value="Ribosomal_S7"/>
    <property type="match status" value="1"/>
</dbReference>
<dbReference type="PIRSF" id="PIRSF002122">
    <property type="entry name" value="RPS7p_RPS7a_RPS5e_RPS7o"/>
    <property type="match status" value="1"/>
</dbReference>
<dbReference type="SUPFAM" id="SSF47973">
    <property type="entry name" value="Ribosomal protein S7"/>
    <property type="match status" value="1"/>
</dbReference>
<dbReference type="PROSITE" id="PS00052">
    <property type="entry name" value="RIBOSOMAL_S7"/>
    <property type="match status" value="1"/>
</dbReference>
<proteinExistence type="inferred from homology"/>
<name>RS7_FLAJ1</name>
<reference key="1">
    <citation type="journal article" date="2009" name="Appl. Environ. Microbiol.">
        <title>Novel features of the polysaccharide-digesting gliding bacterium Flavobacterium johnsoniae as revealed by genome sequence analysis.</title>
        <authorList>
            <person name="McBride M.J."/>
            <person name="Xie G."/>
            <person name="Martens E.C."/>
            <person name="Lapidus A."/>
            <person name="Henrissat B."/>
            <person name="Rhodes R.G."/>
            <person name="Goltsman E."/>
            <person name="Wang W."/>
            <person name="Xu J."/>
            <person name="Hunnicutt D.W."/>
            <person name="Staroscik A.M."/>
            <person name="Hoover T.R."/>
            <person name="Cheng Y.Q."/>
            <person name="Stein J.L."/>
        </authorList>
    </citation>
    <scope>NUCLEOTIDE SEQUENCE [LARGE SCALE GENOMIC DNA]</scope>
    <source>
        <strain>ATCC 17061 / DSM 2064 / JCM 8514 / BCRC 14874 / CCUG 350202 / NBRC 14942 / NCIMB 11054 / UW101</strain>
    </source>
</reference>
<keyword id="KW-0687">Ribonucleoprotein</keyword>
<keyword id="KW-0689">Ribosomal protein</keyword>
<keyword id="KW-0694">RNA-binding</keyword>
<keyword id="KW-0699">rRNA-binding</keyword>
<keyword id="KW-0820">tRNA-binding</keyword>
<feature type="chain" id="PRO_0000344293" description="Small ribosomal subunit protein uS7">
    <location>
        <begin position="1"/>
        <end position="158"/>
    </location>
</feature>
<protein>
    <recommendedName>
        <fullName evidence="1">Small ribosomal subunit protein uS7</fullName>
    </recommendedName>
    <alternativeName>
        <fullName evidence="2">30S ribosomal protein S7</fullName>
    </alternativeName>
</protein>
<gene>
    <name evidence="1" type="primary">rpsG</name>
    <name type="ordered locus">Fjoh_0400</name>
</gene>
<sequence>MRKRAAKKRPLLPDPRFNDQLVTRFVNNLMWDGKKSTAFKVFYDAIDIIETKKQNDEKTSLEIWKDALTNVMPHVEVRSRRVGGATFQIPMQIRPDRKISMAMKWLILYARRRNEKSMAQRLASECLAAAKEEGAAVKKRMDTHKMAEANKAFSHFRF</sequence>
<accession>A5FMY4</accession>
<organism>
    <name type="scientific">Flavobacterium johnsoniae (strain ATCC 17061 / DSM 2064 / JCM 8514 / BCRC 14874 / CCUG 350202 / NBRC 14942 / NCIMB 11054 / UW101)</name>
    <name type="common">Cytophaga johnsonae</name>
    <dbReference type="NCBI Taxonomy" id="376686"/>
    <lineage>
        <taxon>Bacteria</taxon>
        <taxon>Pseudomonadati</taxon>
        <taxon>Bacteroidota</taxon>
        <taxon>Flavobacteriia</taxon>
        <taxon>Flavobacteriales</taxon>
        <taxon>Flavobacteriaceae</taxon>
        <taxon>Flavobacterium</taxon>
    </lineage>
</organism>